<reference key="1">
    <citation type="journal article" date="2002" name="Mol. Genet. Genomics">
        <title>The genes encoding subunits of ATP synthase are conserved in the reduced plastid genome of the heterotrophic alga Prototheca wickerhamii.</title>
        <authorList>
            <person name="Knauf U."/>
            <person name="Hachtel W."/>
        </authorList>
    </citation>
    <scope>NUCLEOTIDE SEQUENCE [GENOMIC DNA]</scope>
    <source>
        <strain>263-11</strain>
    </source>
</reference>
<proteinExistence type="inferred from homology"/>
<feature type="chain" id="PRO_0000163588" description="Large ribosomal subunit protein bL19c">
    <location>
        <begin position="1"/>
        <end position="129"/>
    </location>
</feature>
<gene>
    <name evidence="1" type="primary">rpl19</name>
</gene>
<keyword id="KW-0934">Plastid</keyword>
<keyword id="KW-0687">Ribonucleoprotein</keyword>
<keyword id="KW-0689">Ribosomal protein</keyword>
<accession>Q9TJQ7</accession>
<protein>
    <recommendedName>
        <fullName evidence="1">Large ribosomal subunit protein bL19c</fullName>
    </recommendedName>
    <alternativeName>
        <fullName evidence="2">50S ribosomal protein L19, plastid</fullName>
    </alternativeName>
</protein>
<sequence>MTNFKDIIKKIEYKFSKHQLPDIKVGDLIRLGISIQESGKQRVQPFEGTVIALHKAGLNTTITVRKILQGIGVERVFPIHASCLTSIQVLRRSQVSRAKLYYLRNRTGKATRLKEKFEKLPPIWVNKLP</sequence>
<evidence type="ECO:0000255" key="1">
    <source>
        <dbReference type="HAMAP-Rule" id="MF_00402"/>
    </source>
</evidence>
<evidence type="ECO:0000305" key="2"/>
<geneLocation type="non-photosynthetic plastid"/>
<organism>
    <name type="scientific">Prototheca wickerhamii</name>
    <dbReference type="NCBI Taxonomy" id="3111"/>
    <lineage>
        <taxon>Eukaryota</taxon>
        <taxon>Viridiplantae</taxon>
        <taxon>Chlorophyta</taxon>
        <taxon>core chlorophytes</taxon>
        <taxon>Trebouxiophyceae</taxon>
        <taxon>Chlorellales</taxon>
        <taxon>Chlorellaceae</taxon>
        <taxon>Prototheca</taxon>
    </lineage>
</organism>
<name>RK19_PROWI</name>
<comment type="subcellular location">
    <subcellularLocation>
        <location>Plastid</location>
    </subcellularLocation>
</comment>
<comment type="similarity">
    <text evidence="1">Belongs to the bacterial ribosomal protein bL19 family.</text>
</comment>
<dbReference type="EMBL" id="AJ245645">
    <property type="protein sequence ID" value="CAB53114.1"/>
    <property type="molecule type" value="Genomic_DNA"/>
</dbReference>
<dbReference type="SMR" id="Q9TJQ7"/>
<dbReference type="GO" id="GO:0009536">
    <property type="term" value="C:plastid"/>
    <property type="evidence" value="ECO:0007669"/>
    <property type="project" value="UniProtKB-SubCell"/>
</dbReference>
<dbReference type="GO" id="GO:1990904">
    <property type="term" value="C:ribonucleoprotein complex"/>
    <property type="evidence" value="ECO:0007669"/>
    <property type="project" value="UniProtKB-KW"/>
</dbReference>
<dbReference type="GO" id="GO:0005840">
    <property type="term" value="C:ribosome"/>
    <property type="evidence" value="ECO:0007669"/>
    <property type="project" value="UniProtKB-KW"/>
</dbReference>
<dbReference type="GO" id="GO:0003735">
    <property type="term" value="F:structural constituent of ribosome"/>
    <property type="evidence" value="ECO:0007669"/>
    <property type="project" value="InterPro"/>
</dbReference>
<dbReference type="GO" id="GO:0006412">
    <property type="term" value="P:translation"/>
    <property type="evidence" value="ECO:0007669"/>
    <property type="project" value="InterPro"/>
</dbReference>
<dbReference type="Gene3D" id="2.30.30.790">
    <property type="match status" value="1"/>
</dbReference>
<dbReference type="HAMAP" id="MF_00402">
    <property type="entry name" value="Ribosomal_bL19"/>
    <property type="match status" value="1"/>
</dbReference>
<dbReference type="InterPro" id="IPR001857">
    <property type="entry name" value="Ribosomal_bL19"/>
</dbReference>
<dbReference type="InterPro" id="IPR018257">
    <property type="entry name" value="Ribosomal_bL19_CS"/>
</dbReference>
<dbReference type="InterPro" id="IPR038657">
    <property type="entry name" value="Ribosomal_bL19_sf"/>
</dbReference>
<dbReference type="InterPro" id="IPR008991">
    <property type="entry name" value="Translation_prot_SH3-like_sf"/>
</dbReference>
<dbReference type="NCBIfam" id="TIGR01024">
    <property type="entry name" value="rplS_bact"/>
    <property type="match status" value="1"/>
</dbReference>
<dbReference type="PANTHER" id="PTHR15680:SF9">
    <property type="entry name" value="LARGE RIBOSOMAL SUBUNIT PROTEIN BL19M"/>
    <property type="match status" value="1"/>
</dbReference>
<dbReference type="PANTHER" id="PTHR15680">
    <property type="entry name" value="RIBOSOMAL PROTEIN L19"/>
    <property type="match status" value="1"/>
</dbReference>
<dbReference type="Pfam" id="PF01245">
    <property type="entry name" value="Ribosomal_L19"/>
    <property type="match status" value="1"/>
</dbReference>
<dbReference type="PIRSF" id="PIRSF002191">
    <property type="entry name" value="Ribosomal_L19"/>
    <property type="match status" value="1"/>
</dbReference>
<dbReference type="PRINTS" id="PR00061">
    <property type="entry name" value="RIBOSOMALL19"/>
</dbReference>
<dbReference type="SUPFAM" id="SSF50104">
    <property type="entry name" value="Translation proteins SH3-like domain"/>
    <property type="match status" value="1"/>
</dbReference>
<dbReference type="PROSITE" id="PS01015">
    <property type="entry name" value="RIBOSOMAL_L19"/>
    <property type="match status" value="1"/>
</dbReference>